<evidence type="ECO:0000255" key="1">
    <source>
        <dbReference type="HAMAP-Rule" id="MF_04076"/>
    </source>
</evidence>
<evidence type="ECO:0000256" key="2">
    <source>
        <dbReference type="SAM" id="MobiDB-lite"/>
    </source>
</evidence>
<accession>Q9QBF2</accession>
<sequence>MDIDPYKEFGASTELISFLPADFFPSVRDLLDTAAALYREALESPEHCSHHHTALRQAILCWGELMTLATWVGNNLQDPASRDLVVNYVNTNMGLKIRQLLWFHISCLTFGRETVLEYLVSFGVWIRTPPAYRPPNAPILSTLPETTVVRRRGRSPRRRTPSPRRRRSQSPRRRRSQSRESQC</sequence>
<keyword id="KW-0024">Alternative initiation</keyword>
<keyword id="KW-0167">Capsid protein</keyword>
<keyword id="KW-1176">Cytoplasmic inwards viral transport</keyword>
<keyword id="KW-0238">DNA-binding</keyword>
<keyword id="KW-1035">Host cytoplasm</keyword>
<keyword id="KW-0945">Host-virus interaction</keyword>
<keyword id="KW-1177">Microtubular inwards viral transport</keyword>
<keyword id="KW-0597">Phosphoprotein</keyword>
<keyword id="KW-0677">Repeat</keyword>
<keyword id="KW-0694">RNA-binding</keyword>
<keyword id="KW-1144">T=4 icosahedral capsid protein</keyword>
<keyword id="KW-1163">Viral penetration into host nucleus</keyword>
<keyword id="KW-0946">Virion</keyword>
<keyword id="KW-1160">Virus entry into host cell</keyword>
<protein>
    <recommendedName>
        <fullName evidence="1">Capsid protein</fullName>
    </recommendedName>
    <alternativeName>
        <fullName evidence="1">Core antigen</fullName>
    </alternativeName>
    <alternativeName>
        <fullName evidence="1">Core protein</fullName>
    </alternativeName>
    <alternativeName>
        <fullName evidence="1">HBcAg</fullName>
    </alternativeName>
    <alternativeName>
        <fullName evidence="1">p21.5</fullName>
    </alternativeName>
</protein>
<gene>
    <name evidence="1" type="primary">C</name>
</gene>
<organismHost>
    <name type="scientific">Homo sapiens</name>
    <name type="common">Human</name>
    <dbReference type="NCBI Taxonomy" id="9606"/>
</organismHost>
<organismHost>
    <name type="scientific">Pan troglodytes</name>
    <name type="common">Chimpanzee</name>
    <dbReference type="NCBI Taxonomy" id="9598"/>
</organismHost>
<name>CAPSD_HBVB7</name>
<organism>
    <name type="scientific">Hepatitis B virus genotype B1 (isolate Japan/Yamagata-2/1998)</name>
    <name type="common">HBV-B</name>
    <dbReference type="NCBI Taxonomy" id="489464"/>
    <lineage>
        <taxon>Viruses</taxon>
        <taxon>Riboviria</taxon>
        <taxon>Pararnavirae</taxon>
        <taxon>Artverviricota</taxon>
        <taxon>Revtraviricetes</taxon>
        <taxon>Blubervirales</taxon>
        <taxon>Hepadnaviridae</taxon>
        <taxon>Orthohepadnavirus</taxon>
        <taxon>Hepatitis B virus</taxon>
    </lineage>
</organism>
<reference key="1">
    <citation type="journal article" date="1999" name="Yamagata Med. J.">
        <title>Sequence analysis of the entire genome of hepatitis B virus from a patient with fulminant hepatitis.</title>
        <authorList>
            <person name="Koseki T."/>
            <person name="Hongo S."/>
            <person name="Muraki Y."/>
            <person name="Sugawara K."/>
            <person name="Matsuzaki Y."/>
            <person name="Nakamura K."/>
        </authorList>
    </citation>
    <scope>NUCLEOTIDE SEQUENCE [GENOMIC DNA]</scope>
</reference>
<dbReference type="EMBL" id="AB010290">
    <property type="protein sequence ID" value="BAA88280.1"/>
    <property type="molecule type" value="Genomic_DNA"/>
</dbReference>
<dbReference type="SMR" id="Q9QBF2"/>
<dbReference type="Proteomes" id="UP000007918">
    <property type="component" value="Genome"/>
</dbReference>
<dbReference type="GO" id="GO:0043657">
    <property type="term" value="C:host cell"/>
    <property type="evidence" value="ECO:0007669"/>
    <property type="project" value="GOC"/>
</dbReference>
<dbReference type="GO" id="GO:0030430">
    <property type="term" value="C:host cell cytoplasm"/>
    <property type="evidence" value="ECO:0007669"/>
    <property type="project" value="UniProtKB-SubCell"/>
</dbReference>
<dbReference type="GO" id="GO:0039619">
    <property type="term" value="C:T=4 icosahedral viral capsid"/>
    <property type="evidence" value="ECO:0007669"/>
    <property type="project" value="UniProtKB-UniRule"/>
</dbReference>
<dbReference type="GO" id="GO:0003677">
    <property type="term" value="F:DNA binding"/>
    <property type="evidence" value="ECO:0007669"/>
    <property type="project" value="UniProtKB-UniRule"/>
</dbReference>
<dbReference type="GO" id="GO:0003723">
    <property type="term" value="F:RNA binding"/>
    <property type="evidence" value="ECO:0007669"/>
    <property type="project" value="UniProtKB-UniRule"/>
</dbReference>
<dbReference type="GO" id="GO:0005198">
    <property type="term" value="F:structural molecule activity"/>
    <property type="evidence" value="ECO:0007669"/>
    <property type="project" value="UniProtKB-UniRule"/>
</dbReference>
<dbReference type="GO" id="GO:0075521">
    <property type="term" value="P:microtubule-dependent intracellular transport of viral material towards nucleus"/>
    <property type="evidence" value="ECO:0007669"/>
    <property type="project" value="UniProtKB-UniRule"/>
</dbReference>
<dbReference type="GO" id="GO:0046718">
    <property type="term" value="P:symbiont entry into host cell"/>
    <property type="evidence" value="ECO:0007669"/>
    <property type="project" value="UniProtKB-UniRule"/>
</dbReference>
<dbReference type="GO" id="GO:0075732">
    <property type="term" value="P:viral penetration into host nucleus"/>
    <property type="evidence" value="ECO:0007669"/>
    <property type="project" value="UniProtKB-UniRule"/>
</dbReference>
<dbReference type="FunFam" id="1.10.4090.10:FF:000001">
    <property type="entry name" value="Capsid protein"/>
    <property type="match status" value="1"/>
</dbReference>
<dbReference type="Gene3D" id="1.10.4090.10">
    <property type="entry name" value="Viral capsid, core domain supefamily, Hepatitis B virus"/>
    <property type="match status" value="1"/>
</dbReference>
<dbReference type="HAMAP" id="MF_04076">
    <property type="entry name" value="HBV_HBEAG"/>
    <property type="match status" value="1"/>
</dbReference>
<dbReference type="InterPro" id="IPR002006">
    <property type="entry name" value="Hepatitis_core"/>
</dbReference>
<dbReference type="InterPro" id="IPR036459">
    <property type="entry name" value="Viral_capsid_core_dom_sf_HBV"/>
</dbReference>
<dbReference type="Pfam" id="PF00906">
    <property type="entry name" value="Hepatitis_core"/>
    <property type="match status" value="2"/>
</dbReference>
<dbReference type="SUPFAM" id="SSF47852">
    <property type="entry name" value="Hepatitis B viral capsid (hbcag)"/>
    <property type="match status" value="1"/>
</dbReference>
<proteinExistence type="inferred from homology"/>
<comment type="function">
    <text evidence="1">Self assembles to form an icosahedral capsid. Most capsids appear to be large particles with an icosahedral symmetry of T=4 and consist of 240 copies of capsid protein, though a fraction forms smaller T=3 particles consisting of 180 capsid proteins. Entering capsids are transported along microtubules to the nucleus. Phosphorylation of the capsid is thought to induce exposure of nuclear localization signal in the C-terminal portion of the capsid protein that allows binding to the nuclear pore complex via the importin (karyopherin-) alpha and beta. Capsids are imported in intact form through the nuclear pore into the nuclear basket, where it probably binds NUP153. Only capsids that contain the mature viral genome can release the viral DNA and capsid protein into the nucleoplasm. Immature capsids get stuck in the basket. Capsids encapsulate the pre-genomic RNA and the P protein. Pre-genomic RNA is reverse-transcribed into DNA while the capsid is still in the cytoplasm. The capsid can then either be directed to the nucleus, providing more genomes for transcription, or bud through the endoplasmic reticulum to provide new virions.</text>
</comment>
<comment type="subunit">
    <text evidence="1">Homodimerizes, then multimerizes. Interacts with cytosol exposed regions of viral L glycoprotein present in the reticulum-to-Golgi compartment. Interacts with human FLNB. Phosphorylated form interacts with host importin alpha; this interaction depends on the exposure of the NLS, which itself depends upon genome maturation and/or phosphorylation of the capsid protein. Interacts with host NUP153.</text>
</comment>
<comment type="subcellular location">
    <subcellularLocation>
        <location evidence="1">Virion</location>
    </subcellularLocation>
    <subcellularLocation>
        <location evidence="1">Host cytoplasm</location>
    </subcellularLocation>
</comment>
<comment type="alternative products">
    <event type="alternative initiation"/>
    <isoform>
        <id>Q9QBF2-1</id>
        <name>Capsid protein</name>
        <sequence type="displayed"/>
    </isoform>
    <isoform>
        <id>P0C6H1-1</id>
        <name>External core antigen</name>
        <sequence type="external"/>
    </isoform>
</comment>
<comment type="PTM">
    <text evidence="1">Phosphorylated by host SRPK1, SRPK2, and maybe protein kinase C or GAPDH. Phosphorylation is critical for pregenomic RNA packaging. Protein kinase C phosphorylation is stimulated by HBx protein and may play a role in transport of the viral genome to the nucleus at the late step during the viral replication cycle.</text>
</comment>
<comment type="similarity">
    <text evidence="1">Belongs to the orthohepadnavirus core antigen family.</text>
</comment>
<feature type="chain" id="PRO_0000324360" description="Capsid protein">
    <location>
        <begin position="1"/>
        <end position="183"/>
    </location>
</feature>
<feature type="repeat" description="1; half-length">
    <location>
        <begin position="155"/>
        <end position="161"/>
    </location>
</feature>
<feature type="repeat" description="2">
    <location>
        <begin position="162"/>
        <end position="169"/>
    </location>
</feature>
<feature type="repeat" description="3">
    <location>
        <begin position="170"/>
        <end position="177"/>
    </location>
</feature>
<feature type="region of interest" description="Disordered" evidence="2">
    <location>
        <begin position="136"/>
        <end position="183"/>
    </location>
</feature>
<feature type="region of interest" description="3 X 8 AA repeats of S-P-R-R-R-[PR]-S-Q">
    <location>
        <begin position="155"/>
        <end position="177"/>
    </location>
</feature>
<feature type="region of interest" description="RNA binding" evidence="1">
    <location>
        <begin position="177"/>
        <end position="183"/>
    </location>
</feature>
<feature type="short sequence motif" description="Bipartite nuclear localization signal" evidence="1">
    <location>
        <begin position="158"/>
        <end position="175"/>
    </location>
</feature>
<feature type="compositionally biased region" description="Basic residues" evidence="2">
    <location>
        <begin position="149"/>
        <end position="176"/>
    </location>
</feature>
<feature type="modified residue" description="Phosphoserine; by host" evidence="1">
    <location>
        <position position="155"/>
    </location>
</feature>
<feature type="modified residue" description="Phosphoserine; by host" evidence="1">
    <location>
        <position position="162"/>
    </location>
</feature>
<feature type="modified residue" description="Phosphoserine; by host" evidence="1">
    <location>
        <position position="170"/>
    </location>
</feature>